<sequence length="381" mass="42864">MYIHYLKDLIGFKSVTPENDGAIEYIDDLLKQHGFKTEIKIFGDFKSEQVTNLYAIFGRNEPNICFVGHVDVVPVDNHALWHNSSPFKASKQDGKIYGRGAVDMKGAIACFLAASLDFIKNNAGFKGSISFLLTSDEEGKAKHGTKEMLQYIYDQGYKVDFAIVGEPTCEKEIGDTIKIGRRGSVNFKLNIDGLAGHVAYPHKANNPLPCLIKILHELTNIRLDEGTEFFQNSNLEVTNIDVGNETSNVIPASTEASFNIRFNNLHSAETLAKQVEEIIKRYCKEYKVDYKLEYSSFAGSFIQNPSAKIKEFAKVVEHTLKIKPKFSTSGGTSDARFVKNYCPLVEFGLLSETAHKINEYTKISDLQKLYDVYYNFLIKIL</sequence>
<proteinExistence type="inferred from homology"/>
<protein>
    <recommendedName>
        <fullName evidence="1">Succinyl-diaminopimelate desuccinylase</fullName>
        <shortName evidence="1">SDAP desuccinylase</shortName>
        <ecNumber evidence="1">3.5.1.18</ecNumber>
    </recommendedName>
    <alternativeName>
        <fullName evidence="1">N-succinyl-LL-2,6-diaminoheptanedioate amidohydrolase</fullName>
    </alternativeName>
</protein>
<organism>
    <name type="scientific">Rickettsia akari (strain Hartford)</name>
    <dbReference type="NCBI Taxonomy" id="293614"/>
    <lineage>
        <taxon>Bacteria</taxon>
        <taxon>Pseudomonadati</taxon>
        <taxon>Pseudomonadota</taxon>
        <taxon>Alphaproteobacteria</taxon>
        <taxon>Rickettsiales</taxon>
        <taxon>Rickettsiaceae</taxon>
        <taxon>Rickettsieae</taxon>
        <taxon>Rickettsia</taxon>
        <taxon>spotted fever group</taxon>
    </lineage>
</organism>
<accession>A8GQ98</accession>
<comment type="function">
    <text evidence="1">Catalyzes the hydrolysis of N-succinyl-L,L-diaminopimelic acid (SDAP), forming succinate and LL-2,6-diaminopimelate (DAP), an intermediate involved in the bacterial biosynthesis of lysine and meso-diaminopimelic acid, an essential component of bacterial cell walls.</text>
</comment>
<comment type="catalytic activity">
    <reaction evidence="1">
        <text>N-succinyl-(2S,6S)-2,6-diaminopimelate + H2O = (2S,6S)-2,6-diaminopimelate + succinate</text>
        <dbReference type="Rhea" id="RHEA:22608"/>
        <dbReference type="ChEBI" id="CHEBI:15377"/>
        <dbReference type="ChEBI" id="CHEBI:30031"/>
        <dbReference type="ChEBI" id="CHEBI:57609"/>
        <dbReference type="ChEBI" id="CHEBI:58087"/>
        <dbReference type="EC" id="3.5.1.18"/>
    </reaction>
</comment>
<comment type="cofactor">
    <cofactor evidence="1">
        <name>Zn(2+)</name>
        <dbReference type="ChEBI" id="CHEBI:29105"/>
    </cofactor>
    <cofactor evidence="1">
        <name>Co(2+)</name>
        <dbReference type="ChEBI" id="CHEBI:48828"/>
    </cofactor>
    <text evidence="1">Binds 2 Zn(2+) or Co(2+) ions per subunit.</text>
</comment>
<comment type="pathway">
    <text evidence="1">Amino-acid biosynthesis; L-lysine biosynthesis via DAP pathway; LL-2,6-diaminopimelate from (S)-tetrahydrodipicolinate (succinylase route): step 3/3.</text>
</comment>
<comment type="subunit">
    <text evidence="1">Homodimer.</text>
</comment>
<comment type="similarity">
    <text evidence="1">Belongs to the peptidase M20A family. DapE subfamily.</text>
</comment>
<comment type="sequence caution" evidence="2">
    <conflict type="erroneous initiation">
        <sequence resource="EMBL-CDS" id="ABV75573"/>
    </conflict>
</comment>
<keyword id="KW-0028">Amino-acid biosynthesis</keyword>
<keyword id="KW-0170">Cobalt</keyword>
<keyword id="KW-0220">Diaminopimelate biosynthesis</keyword>
<keyword id="KW-0378">Hydrolase</keyword>
<keyword id="KW-0457">Lysine biosynthesis</keyword>
<keyword id="KW-0479">Metal-binding</keyword>
<keyword id="KW-0862">Zinc</keyword>
<gene>
    <name evidence="1" type="primary">dapE</name>
    <name type="ordered locus">A1C_06750</name>
</gene>
<name>DAPE_RICAH</name>
<reference key="1">
    <citation type="submission" date="2007-09" db="EMBL/GenBank/DDBJ databases">
        <title>Complete genome sequence of Rickettsia akari.</title>
        <authorList>
            <person name="Madan A."/>
            <person name="Fahey J."/>
            <person name="Helton E."/>
            <person name="Ketteman M."/>
            <person name="Madan A."/>
            <person name="Rodrigues S."/>
            <person name="Sanchez A."/>
            <person name="Whiting M."/>
            <person name="Dasch G."/>
            <person name="Eremeeva M."/>
        </authorList>
    </citation>
    <scope>NUCLEOTIDE SEQUENCE [LARGE SCALE GENOMIC DNA]</scope>
    <source>
        <strain>Hartford</strain>
    </source>
</reference>
<dbReference type="EC" id="3.5.1.18" evidence="1"/>
<dbReference type="EMBL" id="CP000847">
    <property type="protein sequence ID" value="ABV75573.1"/>
    <property type="status" value="ALT_INIT"/>
    <property type="molecule type" value="Genomic_DNA"/>
</dbReference>
<dbReference type="RefSeq" id="WP_041816797.1">
    <property type="nucleotide sequence ID" value="NC_009881.1"/>
</dbReference>
<dbReference type="SMR" id="A8GQ98"/>
<dbReference type="STRING" id="293614.A1C_06750"/>
<dbReference type="KEGG" id="rak:A1C_06750"/>
<dbReference type="eggNOG" id="COG0624">
    <property type="taxonomic scope" value="Bacteria"/>
</dbReference>
<dbReference type="HOGENOM" id="CLU_021802_4_0_5"/>
<dbReference type="UniPathway" id="UPA00034">
    <property type="reaction ID" value="UER00021"/>
</dbReference>
<dbReference type="Proteomes" id="UP000006830">
    <property type="component" value="Chromosome"/>
</dbReference>
<dbReference type="GO" id="GO:0008777">
    <property type="term" value="F:acetylornithine deacetylase activity"/>
    <property type="evidence" value="ECO:0007669"/>
    <property type="project" value="TreeGrafter"/>
</dbReference>
<dbReference type="GO" id="GO:0050897">
    <property type="term" value="F:cobalt ion binding"/>
    <property type="evidence" value="ECO:0007669"/>
    <property type="project" value="UniProtKB-UniRule"/>
</dbReference>
<dbReference type="GO" id="GO:0009014">
    <property type="term" value="F:succinyl-diaminopimelate desuccinylase activity"/>
    <property type="evidence" value="ECO:0007669"/>
    <property type="project" value="UniProtKB-UniRule"/>
</dbReference>
<dbReference type="GO" id="GO:0008270">
    <property type="term" value="F:zinc ion binding"/>
    <property type="evidence" value="ECO:0007669"/>
    <property type="project" value="UniProtKB-UniRule"/>
</dbReference>
<dbReference type="GO" id="GO:0019877">
    <property type="term" value="P:diaminopimelate biosynthetic process"/>
    <property type="evidence" value="ECO:0007669"/>
    <property type="project" value="UniProtKB-UniRule"/>
</dbReference>
<dbReference type="GO" id="GO:0006526">
    <property type="term" value="P:L-arginine biosynthetic process"/>
    <property type="evidence" value="ECO:0007669"/>
    <property type="project" value="TreeGrafter"/>
</dbReference>
<dbReference type="GO" id="GO:0009089">
    <property type="term" value="P:lysine biosynthetic process via diaminopimelate"/>
    <property type="evidence" value="ECO:0007669"/>
    <property type="project" value="UniProtKB-UniRule"/>
</dbReference>
<dbReference type="CDD" id="cd03891">
    <property type="entry name" value="M20_DapE_proteobac"/>
    <property type="match status" value="1"/>
</dbReference>
<dbReference type="Gene3D" id="3.30.70.360">
    <property type="match status" value="1"/>
</dbReference>
<dbReference type="Gene3D" id="3.40.630.10">
    <property type="entry name" value="Zn peptidases"/>
    <property type="match status" value="2"/>
</dbReference>
<dbReference type="HAMAP" id="MF_01690">
    <property type="entry name" value="DapE"/>
    <property type="match status" value="1"/>
</dbReference>
<dbReference type="InterPro" id="IPR001261">
    <property type="entry name" value="ArgE/DapE_CS"/>
</dbReference>
<dbReference type="InterPro" id="IPR036264">
    <property type="entry name" value="Bact_exopeptidase_dim_dom"/>
</dbReference>
<dbReference type="InterPro" id="IPR005941">
    <property type="entry name" value="DapE_proteobac"/>
</dbReference>
<dbReference type="InterPro" id="IPR002933">
    <property type="entry name" value="Peptidase_M20"/>
</dbReference>
<dbReference type="InterPro" id="IPR011650">
    <property type="entry name" value="Peptidase_M20_dimer"/>
</dbReference>
<dbReference type="InterPro" id="IPR050072">
    <property type="entry name" value="Peptidase_M20A"/>
</dbReference>
<dbReference type="NCBIfam" id="TIGR01246">
    <property type="entry name" value="dapE_proteo"/>
    <property type="match status" value="1"/>
</dbReference>
<dbReference type="NCBIfam" id="NF009557">
    <property type="entry name" value="PRK13009.1"/>
    <property type="match status" value="1"/>
</dbReference>
<dbReference type="PANTHER" id="PTHR43808">
    <property type="entry name" value="ACETYLORNITHINE DEACETYLASE"/>
    <property type="match status" value="1"/>
</dbReference>
<dbReference type="PANTHER" id="PTHR43808:SF31">
    <property type="entry name" value="N-ACETYL-L-CITRULLINE DEACETYLASE"/>
    <property type="match status" value="1"/>
</dbReference>
<dbReference type="Pfam" id="PF07687">
    <property type="entry name" value="M20_dimer"/>
    <property type="match status" value="1"/>
</dbReference>
<dbReference type="Pfam" id="PF01546">
    <property type="entry name" value="Peptidase_M20"/>
    <property type="match status" value="1"/>
</dbReference>
<dbReference type="SUPFAM" id="SSF55031">
    <property type="entry name" value="Bacterial exopeptidase dimerisation domain"/>
    <property type="match status" value="1"/>
</dbReference>
<dbReference type="SUPFAM" id="SSF53187">
    <property type="entry name" value="Zn-dependent exopeptidases"/>
    <property type="match status" value="1"/>
</dbReference>
<dbReference type="PROSITE" id="PS00759">
    <property type="entry name" value="ARGE_DAPE_CPG2_2"/>
    <property type="match status" value="1"/>
</dbReference>
<evidence type="ECO:0000255" key="1">
    <source>
        <dbReference type="HAMAP-Rule" id="MF_01690"/>
    </source>
</evidence>
<evidence type="ECO:0000305" key="2"/>
<feature type="chain" id="PRO_0000375697" description="Succinyl-diaminopimelate desuccinylase">
    <location>
        <begin position="1"/>
        <end position="381"/>
    </location>
</feature>
<feature type="active site" evidence="1">
    <location>
        <position position="71"/>
    </location>
</feature>
<feature type="active site" description="Proton acceptor" evidence="1">
    <location>
        <position position="137"/>
    </location>
</feature>
<feature type="binding site" evidence="1">
    <location>
        <position position="69"/>
    </location>
    <ligand>
        <name>Zn(2+)</name>
        <dbReference type="ChEBI" id="CHEBI:29105"/>
        <label>1</label>
    </ligand>
</feature>
<feature type="binding site" evidence="1">
    <location>
        <position position="103"/>
    </location>
    <ligand>
        <name>Zn(2+)</name>
        <dbReference type="ChEBI" id="CHEBI:29105"/>
        <label>1</label>
    </ligand>
</feature>
<feature type="binding site" evidence="1">
    <location>
        <position position="103"/>
    </location>
    <ligand>
        <name>Zn(2+)</name>
        <dbReference type="ChEBI" id="CHEBI:29105"/>
        <label>2</label>
    </ligand>
</feature>
<feature type="binding site" evidence="1">
    <location>
        <position position="138"/>
    </location>
    <ligand>
        <name>Zn(2+)</name>
        <dbReference type="ChEBI" id="CHEBI:29105"/>
        <label>2</label>
    </ligand>
</feature>
<feature type="binding site" evidence="1">
    <location>
        <position position="166"/>
    </location>
    <ligand>
        <name>Zn(2+)</name>
        <dbReference type="ChEBI" id="CHEBI:29105"/>
        <label>1</label>
    </ligand>
</feature>
<feature type="binding site" evidence="1">
    <location>
        <position position="355"/>
    </location>
    <ligand>
        <name>Zn(2+)</name>
        <dbReference type="ChEBI" id="CHEBI:29105"/>
        <label>2</label>
    </ligand>
</feature>